<reference key="1">
    <citation type="submission" date="2006-12" db="EMBL/GenBank/DDBJ databases">
        <title>Bifidobacterium adolescentis complete genome sequence.</title>
        <authorList>
            <person name="Suzuki T."/>
            <person name="Tsuda Y."/>
            <person name="Kanou N."/>
            <person name="Inoue T."/>
            <person name="Kumazaki K."/>
            <person name="Nagano S."/>
            <person name="Hirai S."/>
            <person name="Tanaka K."/>
            <person name="Watanabe K."/>
        </authorList>
    </citation>
    <scope>NUCLEOTIDE SEQUENCE [LARGE SCALE GENOMIC DNA]</scope>
    <source>
        <strain>ATCC 15703 / DSM 20083 / NCTC 11814 / E194a</strain>
    </source>
</reference>
<sequence>MLIQILLIGVSVSMDTFAVSIGKGLTVKKLRGLDALKTALWFGGFQALFPLLGYFAASTFSKYVTAVDHWIIFGLLALIGGNMVREAFEEDEENAKETPEFDWKHMLPLAVACSIDAVAVGVSFAFMTLNIWLSVVIIGITTGLFSAAGLYIGRVFGSRWQKPAQIAGGVVLILIGLKVLFEHLGFLG</sequence>
<gene>
    <name evidence="1" type="primary">mntP</name>
    <name type="ordered locus">BAD_1445</name>
</gene>
<protein>
    <recommendedName>
        <fullName evidence="1">Putative manganese efflux pump MntP</fullName>
    </recommendedName>
</protein>
<feature type="chain" id="PRO_0000292530" description="Putative manganese efflux pump MntP">
    <location>
        <begin position="1"/>
        <end position="188"/>
    </location>
</feature>
<feature type="transmembrane region" description="Helical" evidence="1">
    <location>
        <begin position="1"/>
        <end position="21"/>
    </location>
</feature>
<feature type="transmembrane region" description="Helical" evidence="1">
    <location>
        <begin position="40"/>
        <end position="60"/>
    </location>
</feature>
<feature type="transmembrane region" description="Helical" evidence="1">
    <location>
        <begin position="64"/>
        <end position="84"/>
    </location>
</feature>
<feature type="transmembrane region" description="Helical" evidence="1">
    <location>
        <begin position="105"/>
        <end position="127"/>
    </location>
</feature>
<feature type="transmembrane region" description="Helical" evidence="1">
    <location>
        <begin position="131"/>
        <end position="153"/>
    </location>
</feature>
<feature type="transmembrane region" description="Helical" evidence="1">
    <location>
        <begin position="166"/>
        <end position="186"/>
    </location>
</feature>
<accession>A1A3E3</accession>
<proteinExistence type="inferred from homology"/>
<dbReference type="EMBL" id="AP009256">
    <property type="protein sequence ID" value="BAF40226.1"/>
    <property type="molecule type" value="Genomic_DNA"/>
</dbReference>
<dbReference type="RefSeq" id="WP_011743734.1">
    <property type="nucleotide sequence ID" value="NC_008618.1"/>
</dbReference>
<dbReference type="PaxDb" id="1680-BADO_1570"/>
<dbReference type="GeneID" id="4557669"/>
<dbReference type="KEGG" id="bad:BAD_1445"/>
<dbReference type="HOGENOM" id="CLU_096410_3_0_11"/>
<dbReference type="Proteomes" id="UP000008702">
    <property type="component" value="Chromosome"/>
</dbReference>
<dbReference type="GO" id="GO:0005886">
    <property type="term" value="C:plasma membrane"/>
    <property type="evidence" value="ECO:0007669"/>
    <property type="project" value="UniProtKB-SubCell"/>
</dbReference>
<dbReference type="GO" id="GO:0005384">
    <property type="term" value="F:manganese ion transmembrane transporter activity"/>
    <property type="evidence" value="ECO:0007669"/>
    <property type="project" value="UniProtKB-UniRule"/>
</dbReference>
<dbReference type="HAMAP" id="MF_01521">
    <property type="entry name" value="MntP_pump"/>
    <property type="match status" value="1"/>
</dbReference>
<dbReference type="InterPro" id="IPR003810">
    <property type="entry name" value="Mntp/YtaF"/>
</dbReference>
<dbReference type="InterPro" id="IPR022929">
    <property type="entry name" value="Put_MntP"/>
</dbReference>
<dbReference type="PANTHER" id="PTHR35529">
    <property type="entry name" value="MANGANESE EFFLUX PUMP MNTP-RELATED"/>
    <property type="match status" value="1"/>
</dbReference>
<dbReference type="PANTHER" id="PTHR35529:SF1">
    <property type="entry name" value="MANGANESE EFFLUX PUMP MNTP-RELATED"/>
    <property type="match status" value="1"/>
</dbReference>
<dbReference type="Pfam" id="PF02659">
    <property type="entry name" value="Mntp"/>
    <property type="match status" value="1"/>
</dbReference>
<organism>
    <name type="scientific">Bifidobacterium adolescentis (strain ATCC 15703 / DSM 20083 / NCTC 11814 / E194a)</name>
    <dbReference type="NCBI Taxonomy" id="367928"/>
    <lineage>
        <taxon>Bacteria</taxon>
        <taxon>Bacillati</taxon>
        <taxon>Actinomycetota</taxon>
        <taxon>Actinomycetes</taxon>
        <taxon>Bifidobacteriales</taxon>
        <taxon>Bifidobacteriaceae</taxon>
        <taxon>Bifidobacterium</taxon>
    </lineage>
</organism>
<evidence type="ECO:0000255" key="1">
    <source>
        <dbReference type="HAMAP-Rule" id="MF_01521"/>
    </source>
</evidence>
<keyword id="KW-1003">Cell membrane</keyword>
<keyword id="KW-0406">Ion transport</keyword>
<keyword id="KW-0464">Manganese</keyword>
<keyword id="KW-0472">Membrane</keyword>
<keyword id="KW-1185">Reference proteome</keyword>
<keyword id="KW-0812">Transmembrane</keyword>
<keyword id="KW-1133">Transmembrane helix</keyword>
<keyword id="KW-0813">Transport</keyword>
<name>MNTP_BIFAA</name>
<comment type="function">
    <text evidence="1">Probably functions as a manganese efflux pump.</text>
</comment>
<comment type="subcellular location">
    <subcellularLocation>
        <location evidence="1">Cell membrane</location>
        <topology evidence="1">Multi-pass membrane protein</topology>
    </subcellularLocation>
</comment>
<comment type="similarity">
    <text evidence="1">Belongs to the MntP (TC 9.B.29) family.</text>
</comment>